<sequence length="187" mass="20052">MDWLTILGISVALAMDAFAVALAAGAVISPITGRHLFRLGFHFGLFQALMPIGGWLLGMTVQRWISAYDHWIAFGLLVFVGGRMVHEAFEDDEDKTPSDPTKGMTMVMLSVATSIDAFAVGLSIAMLGVSVWLPATVIGLVAGVLTVAGMLMGRRLGEKWGKRVEICGGLVLCLIGLKILLEHTLLK</sequence>
<name>MNTP_GEOSM</name>
<keyword id="KW-0997">Cell inner membrane</keyword>
<keyword id="KW-1003">Cell membrane</keyword>
<keyword id="KW-0406">Ion transport</keyword>
<keyword id="KW-0464">Manganese</keyword>
<keyword id="KW-0472">Membrane</keyword>
<keyword id="KW-0812">Transmembrane</keyword>
<keyword id="KW-1133">Transmembrane helix</keyword>
<keyword id="KW-0813">Transport</keyword>
<gene>
    <name evidence="1" type="primary">mntP</name>
    <name type="ordered locus">GM21_2522</name>
</gene>
<comment type="function">
    <text evidence="1">Probably functions as a manganese efflux pump.</text>
</comment>
<comment type="subcellular location">
    <subcellularLocation>
        <location evidence="1">Cell inner membrane</location>
        <topology evidence="1">Multi-pass membrane protein</topology>
    </subcellularLocation>
</comment>
<comment type="similarity">
    <text evidence="1">Belongs to the MntP (TC 9.B.29) family.</text>
</comment>
<accession>C6E019</accession>
<reference key="1">
    <citation type="submission" date="2009-07" db="EMBL/GenBank/DDBJ databases">
        <title>Complete sequence of Geobacter sp. M21.</title>
        <authorList>
            <consortium name="US DOE Joint Genome Institute"/>
            <person name="Lucas S."/>
            <person name="Copeland A."/>
            <person name="Lapidus A."/>
            <person name="Glavina del Rio T."/>
            <person name="Dalin E."/>
            <person name="Tice H."/>
            <person name="Bruce D."/>
            <person name="Goodwin L."/>
            <person name="Pitluck S."/>
            <person name="Saunders E."/>
            <person name="Brettin T."/>
            <person name="Detter J.C."/>
            <person name="Han C."/>
            <person name="Larimer F."/>
            <person name="Land M."/>
            <person name="Hauser L."/>
            <person name="Kyrpides N."/>
            <person name="Ovchinnikova G."/>
            <person name="Lovley D."/>
        </authorList>
    </citation>
    <scope>NUCLEOTIDE SEQUENCE [LARGE SCALE GENOMIC DNA]</scope>
    <source>
        <strain>M21</strain>
    </source>
</reference>
<proteinExistence type="inferred from homology"/>
<evidence type="ECO:0000255" key="1">
    <source>
        <dbReference type="HAMAP-Rule" id="MF_01521"/>
    </source>
</evidence>
<protein>
    <recommendedName>
        <fullName evidence="1">Putative manganese efflux pump MntP</fullName>
    </recommendedName>
</protein>
<feature type="chain" id="PRO_1000215371" description="Putative manganese efflux pump MntP">
    <location>
        <begin position="1"/>
        <end position="187"/>
    </location>
</feature>
<feature type="transmembrane region" description="Helical" evidence="1">
    <location>
        <begin position="3"/>
        <end position="23"/>
    </location>
</feature>
<feature type="transmembrane region" description="Helical" evidence="1">
    <location>
        <begin position="39"/>
        <end position="59"/>
    </location>
</feature>
<feature type="transmembrane region" description="Helical" evidence="1">
    <location>
        <begin position="65"/>
        <end position="85"/>
    </location>
</feature>
<feature type="transmembrane region" description="Helical" evidence="1">
    <location>
        <begin position="103"/>
        <end position="123"/>
    </location>
</feature>
<feature type="transmembrane region" description="Helical" evidence="1">
    <location>
        <begin position="124"/>
        <end position="144"/>
    </location>
</feature>
<feature type="transmembrane region" description="Helical" evidence="1">
    <location>
        <begin position="166"/>
        <end position="186"/>
    </location>
</feature>
<dbReference type="EMBL" id="CP001661">
    <property type="protein sequence ID" value="ACT18563.1"/>
    <property type="molecule type" value="Genomic_DNA"/>
</dbReference>
<dbReference type="STRING" id="443144.GM21_2522"/>
<dbReference type="KEGG" id="gem:GM21_2522"/>
<dbReference type="eggNOG" id="COG1971">
    <property type="taxonomic scope" value="Bacteria"/>
</dbReference>
<dbReference type="HOGENOM" id="CLU_096410_3_0_7"/>
<dbReference type="OrthoDB" id="9811590at2"/>
<dbReference type="GO" id="GO:0005886">
    <property type="term" value="C:plasma membrane"/>
    <property type="evidence" value="ECO:0007669"/>
    <property type="project" value="UniProtKB-SubCell"/>
</dbReference>
<dbReference type="GO" id="GO:0005384">
    <property type="term" value="F:manganese ion transmembrane transporter activity"/>
    <property type="evidence" value="ECO:0007669"/>
    <property type="project" value="UniProtKB-UniRule"/>
</dbReference>
<dbReference type="HAMAP" id="MF_01521">
    <property type="entry name" value="MntP_pump"/>
    <property type="match status" value="1"/>
</dbReference>
<dbReference type="InterPro" id="IPR003810">
    <property type="entry name" value="Mntp/YtaF"/>
</dbReference>
<dbReference type="InterPro" id="IPR022929">
    <property type="entry name" value="Put_MntP"/>
</dbReference>
<dbReference type="PANTHER" id="PTHR35529">
    <property type="entry name" value="MANGANESE EFFLUX PUMP MNTP-RELATED"/>
    <property type="match status" value="1"/>
</dbReference>
<dbReference type="PANTHER" id="PTHR35529:SF1">
    <property type="entry name" value="MANGANESE EFFLUX PUMP MNTP-RELATED"/>
    <property type="match status" value="1"/>
</dbReference>
<dbReference type="Pfam" id="PF02659">
    <property type="entry name" value="Mntp"/>
    <property type="match status" value="1"/>
</dbReference>
<organism>
    <name type="scientific">Geobacter sp. (strain M21)</name>
    <dbReference type="NCBI Taxonomy" id="443144"/>
    <lineage>
        <taxon>Bacteria</taxon>
        <taxon>Pseudomonadati</taxon>
        <taxon>Thermodesulfobacteriota</taxon>
        <taxon>Desulfuromonadia</taxon>
        <taxon>Geobacterales</taxon>
        <taxon>Geobacteraceae</taxon>
        <taxon>Geobacter</taxon>
    </lineage>
</organism>